<gene>
    <name evidence="1" type="primary">tsaD</name>
    <name type="synonym">gcp</name>
    <name type="ordered locus">PST_0715</name>
</gene>
<evidence type="ECO:0000255" key="1">
    <source>
        <dbReference type="HAMAP-Rule" id="MF_01445"/>
    </source>
</evidence>
<evidence type="ECO:0000305" key="2"/>
<organism>
    <name type="scientific">Stutzerimonas stutzeri (strain A1501)</name>
    <name type="common">Pseudomonas stutzeri</name>
    <dbReference type="NCBI Taxonomy" id="379731"/>
    <lineage>
        <taxon>Bacteria</taxon>
        <taxon>Pseudomonadati</taxon>
        <taxon>Pseudomonadota</taxon>
        <taxon>Gammaproteobacteria</taxon>
        <taxon>Pseudomonadales</taxon>
        <taxon>Pseudomonadaceae</taxon>
        <taxon>Stutzerimonas</taxon>
    </lineage>
</organism>
<dbReference type="EC" id="2.3.1.234" evidence="1"/>
<dbReference type="EMBL" id="CP000304">
    <property type="protein sequence ID" value="ABP78420.1"/>
    <property type="status" value="ALT_INIT"/>
    <property type="molecule type" value="Genomic_DNA"/>
</dbReference>
<dbReference type="RefSeq" id="WP_014595739.1">
    <property type="nucleotide sequence ID" value="NC_009434.1"/>
</dbReference>
<dbReference type="SMR" id="A4VHG9"/>
<dbReference type="KEGG" id="psa:PST_0715"/>
<dbReference type="eggNOG" id="COG0533">
    <property type="taxonomic scope" value="Bacteria"/>
</dbReference>
<dbReference type="HOGENOM" id="CLU_023208_0_2_6"/>
<dbReference type="Proteomes" id="UP000000233">
    <property type="component" value="Chromosome"/>
</dbReference>
<dbReference type="GO" id="GO:0005737">
    <property type="term" value="C:cytoplasm"/>
    <property type="evidence" value="ECO:0007669"/>
    <property type="project" value="UniProtKB-SubCell"/>
</dbReference>
<dbReference type="GO" id="GO:0005506">
    <property type="term" value="F:iron ion binding"/>
    <property type="evidence" value="ECO:0007669"/>
    <property type="project" value="UniProtKB-UniRule"/>
</dbReference>
<dbReference type="GO" id="GO:0061711">
    <property type="term" value="F:N(6)-L-threonylcarbamoyladenine synthase activity"/>
    <property type="evidence" value="ECO:0007669"/>
    <property type="project" value="UniProtKB-EC"/>
</dbReference>
<dbReference type="GO" id="GO:0002949">
    <property type="term" value="P:tRNA threonylcarbamoyladenosine modification"/>
    <property type="evidence" value="ECO:0007669"/>
    <property type="project" value="UniProtKB-UniRule"/>
</dbReference>
<dbReference type="CDD" id="cd24133">
    <property type="entry name" value="ASKHA_NBD_TsaD_bac"/>
    <property type="match status" value="1"/>
</dbReference>
<dbReference type="FunFam" id="3.30.420.40:FF:000012">
    <property type="entry name" value="tRNA N6-adenosine threonylcarbamoyltransferase"/>
    <property type="match status" value="1"/>
</dbReference>
<dbReference type="FunFam" id="3.30.420.40:FF:000031">
    <property type="entry name" value="tRNA N6-adenosine threonylcarbamoyltransferase"/>
    <property type="match status" value="1"/>
</dbReference>
<dbReference type="Gene3D" id="3.30.420.40">
    <property type="match status" value="2"/>
</dbReference>
<dbReference type="HAMAP" id="MF_01445">
    <property type="entry name" value="TsaD"/>
    <property type="match status" value="1"/>
</dbReference>
<dbReference type="InterPro" id="IPR043129">
    <property type="entry name" value="ATPase_NBD"/>
</dbReference>
<dbReference type="InterPro" id="IPR000905">
    <property type="entry name" value="Gcp-like_dom"/>
</dbReference>
<dbReference type="InterPro" id="IPR017861">
    <property type="entry name" value="KAE1/TsaD"/>
</dbReference>
<dbReference type="InterPro" id="IPR022450">
    <property type="entry name" value="TsaD"/>
</dbReference>
<dbReference type="NCBIfam" id="TIGR00329">
    <property type="entry name" value="gcp_kae1"/>
    <property type="match status" value="1"/>
</dbReference>
<dbReference type="NCBIfam" id="TIGR03723">
    <property type="entry name" value="T6A_TsaD_YgjD"/>
    <property type="match status" value="1"/>
</dbReference>
<dbReference type="PANTHER" id="PTHR11735">
    <property type="entry name" value="TRNA N6-ADENOSINE THREONYLCARBAMOYLTRANSFERASE"/>
    <property type="match status" value="1"/>
</dbReference>
<dbReference type="PANTHER" id="PTHR11735:SF6">
    <property type="entry name" value="TRNA N6-ADENOSINE THREONYLCARBAMOYLTRANSFERASE, MITOCHONDRIAL"/>
    <property type="match status" value="1"/>
</dbReference>
<dbReference type="Pfam" id="PF00814">
    <property type="entry name" value="TsaD"/>
    <property type="match status" value="1"/>
</dbReference>
<dbReference type="PRINTS" id="PR00789">
    <property type="entry name" value="OSIALOPTASE"/>
</dbReference>
<dbReference type="SUPFAM" id="SSF53067">
    <property type="entry name" value="Actin-like ATPase domain"/>
    <property type="match status" value="2"/>
</dbReference>
<reference key="1">
    <citation type="journal article" date="2008" name="Proc. Natl. Acad. Sci. U.S.A.">
        <title>Nitrogen fixation island and rhizosphere competence traits in the genome of root-associated Pseudomonas stutzeri A1501.</title>
        <authorList>
            <person name="Yan Y."/>
            <person name="Yang J."/>
            <person name="Dou Y."/>
            <person name="Chen M."/>
            <person name="Ping S."/>
            <person name="Peng J."/>
            <person name="Lu W."/>
            <person name="Zhang W."/>
            <person name="Yao Z."/>
            <person name="Li H."/>
            <person name="Liu W."/>
            <person name="He S."/>
            <person name="Geng L."/>
            <person name="Zhang X."/>
            <person name="Yang F."/>
            <person name="Yu H."/>
            <person name="Zhan Y."/>
            <person name="Li D."/>
            <person name="Lin Z."/>
            <person name="Wang Y."/>
            <person name="Elmerich C."/>
            <person name="Lin M."/>
            <person name="Jin Q."/>
        </authorList>
    </citation>
    <scope>NUCLEOTIDE SEQUENCE [LARGE SCALE GENOMIC DNA]</scope>
    <source>
        <strain>A1501</strain>
    </source>
</reference>
<name>TSAD_STUS1</name>
<comment type="function">
    <text evidence="1">Required for the formation of a threonylcarbamoyl group on adenosine at position 37 (t(6)A37) in tRNAs that read codons beginning with adenine. Is involved in the transfer of the threonylcarbamoyl moiety of threonylcarbamoyl-AMP (TC-AMP) to the N6 group of A37, together with TsaE and TsaB. TsaD likely plays a direct catalytic role in this reaction.</text>
</comment>
<comment type="catalytic activity">
    <reaction evidence="1">
        <text>L-threonylcarbamoyladenylate + adenosine(37) in tRNA = N(6)-L-threonylcarbamoyladenosine(37) in tRNA + AMP + H(+)</text>
        <dbReference type="Rhea" id="RHEA:37059"/>
        <dbReference type="Rhea" id="RHEA-COMP:10162"/>
        <dbReference type="Rhea" id="RHEA-COMP:10163"/>
        <dbReference type="ChEBI" id="CHEBI:15378"/>
        <dbReference type="ChEBI" id="CHEBI:73682"/>
        <dbReference type="ChEBI" id="CHEBI:74411"/>
        <dbReference type="ChEBI" id="CHEBI:74418"/>
        <dbReference type="ChEBI" id="CHEBI:456215"/>
        <dbReference type="EC" id="2.3.1.234"/>
    </reaction>
</comment>
<comment type="cofactor">
    <cofactor evidence="1">
        <name>Fe(2+)</name>
        <dbReference type="ChEBI" id="CHEBI:29033"/>
    </cofactor>
    <text evidence="1">Binds 1 Fe(2+) ion per subunit.</text>
</comment>
<comment type="subcellular location">
    <subcellularLocation>
        <location evidence="1">Cytoplasm</location>
    </subcellularLocation>
</comment>
<comment type="similarity">
    <text evidence="1">Belongs to the KAE1 / TsaD family.</text>
</comment>
<comment type="sequence caution" evidence="2">
    <conflict type="erroneous initiation">
        <sequence resource="EMBL-CDS" id="ABP78420"/>
    </conflict>
</comment>
<sequence>MLVLGLETSCDETGVALYDSERGLLADALFSQIDLHRVYGGVVPELASRDHVKRMLPLIRQVLAEAGREPGQVDAVAYTAGPGLVGALLVGASCAQALALAWGVPAVGVHHMEGHLLAPMLEAQPPAFPFVALLVSGGHTQLVRVDGIGRYELLGESVDDAAGEAFDKTAKLMGLRYPGGPEIARLAEQGTPGRFVFPRPMTDRPGLDFSFSGLKTFTLNTWQQCRDAGDDSEQTRCDIALAFQQAVVETLTIKCRRALKQTGLKSLVIAGGVSANQSLRQSLETMLAELKGQVFYARPRFCTDNGAMIAYAGCQRLLAGQHDGPAIAVQPRWSMETLPAI</sequence>
<proteinExistence type="inferred from homology"/>
<feature type="chain" id="PRO_0000303496" description="tRNA N6-adenosine threonylcarbamoyltransferase">
    <location>
        <begin position="1"/>
        <end position="341"/>
    </location>
</feature>
<feature type="binding site" evidence="1">
    <location>
        <position position="111"/>
    </location>
    <ligand>
        <name>Fe cation</name>
        <dbReference type="ChEBI" id="CHEBI:24875"/>
    </ligand>
</feature>
<feature type="binding site" evidence="1">
    <location>
        <position position="115"/>
    </location>
    <ligand>
        <name>Fe cation</name>
        <dbReference type="ChEBI" id="CHEBI:24875"/>
    </ligand>
</feature>
<feature type="binding site" evidence="1">
    <location>
        <begin position="134"/>
        <end position="138"/>
    </location>
    <ligand>
        <name>substrate</name>
    </ligand>
</feature>
<feature type="binding site" evidence="1">
    <location>
        <position position="167"/>
    </location>
    <ligand>
        <name>substrate</name>
    </ligand>
</feature>
<feature type="binding site" evidence="1">
    <location>
        <position position="180"/>
    </location>
    <ligand>
        <name>substrate</name>
    </ligand>
</feature>
<feature type="binding site" evidence="1">
    <location>
        <position position="276"/>
    </location>
    <ligand>
        <name>substrate</name>
    </ligand>
</feature>
<feature type="binding site" evidence="1">
    <location>
        <position position="304"/>
    </location>
    <ligand>
        <name>Fe cation</name>
        <dbReference type="ChEBI" id="CHEBI:24875"/>
    </ligand>
</feature>
<accession>A4VHG9</accession>
<protein>
    <recommendedName>
        <fullName evidence="1">tRNA N6-adenosine threonylcarbamoyltransferase</fullName>
        <ecNumber evidence="1">2.3.1.234</ecNumber>
    </recommendedName>
    <alternativeName>
        <fullName evidence="1">N6-L-threonylcarbamoyladenine synthase</fullName>
        <shortName evidence="1">t(6)A synthase</shortName>
    </alternativeName>
    <alternativeName>
        <fullName evidence="1">t(6)A37 threonylcarbamoyladenosine biosynthesis protein TsaD</fullName>
    </alternativeName>
    <alternativeName>
        <fullName evidence="1">tRNA threonylcarbamoyladenosine biosynthesis protein TsaD</fullName>
    </alternativeName>
</protein>
<keyword id="KW-0012">Acyltransferase</keyword>
<keyword id="KW-0963">Cytoplasm</keyword>
<keyword id="KW-0408">Iron</keyword>
<keyword id="KW-0479">Metal-binding</keyword>
<keyword id="KW-1185">Reference proteome</keyword>
<keyword id="KW-0808">Transferase</keyword>
<keyword id="KW-0819">tRNA processing</keyword>